<gene>
    <name type="primary">ctaB</name>
    <name type="ordered locus">RoseRS_0224</name>
</gene>
<organism>
    <name type="scientific">Roseiflexus sp. (strain RS-1)</name>
    <dbReference type="NCBI Taxonomy" id="357808"/>
    <lineage>
        <taxon>Bacteria</taxon>
        <taxon>Bacillati</taxon>
        <taxon>Chloroflexota</taxon>
        <taxon>Chloroflexia</taxon>
        <taxon>Chloroflexales</taxon>
        <taxon>Roseiflexineae</taxon>
        <taxon>Roseiflexaceae</taxon>
        <taxon>Roseiflexus</taxon>
    </lineage>
</organism>
<dbReference type="EC" id="2.5.1.141"/>
<dbReference type="EMBL" id="CP000686">
    <property type="protein sequence ID" value="ABQ88660.1"/>
    <property type="molecule type" value="Genomic_DNA"/>
</dbReference>
<dbReference type="RefSeq" id="WP_011955019.1">
    <property type="nucleotide sequence ID" value="NC_009523.1"/>
</dbReference>
<dbReference type="SMR" id="A5UPV7"/>
<dbReference type="STRING" id="357808.RoseRS_0224"/>
<dbReference type="KEGG" id="rrs:RoseRS_0224"/>
<dbReference type="eggNOG" id="COG0109">
    <property type="taxonomic scope" value="Bacteria"/>
</dbReference>
<dbReference type="eggNOG" id="COG1612">
    <property type="taxonomic scope" value="Bacteria"/>
</dbReference>
<dbReference type="HOGENOM" id="CLU_030009_1_1_0"/>
<dbReference type="OrthoDB" id="9814417at2"/>
<dbReference type="UniPathway" id="UPA00834">
    <property type="reaction ID" value="UER00712"/>
</dbReference>
<dbReference type="Proteomes" id="UP000006554">
    <property type="component" value="Chromosome"/>
</dbReference>
<dbReference type="GO" id="GO:0005886">
    <property type="term" value="C:plasma membrane"/>
    <property type="evidence" value="ECO:0007669"/>
    <property type="project" value="UniProtKB-SubCell"/>
</dbReference>
<dbReference type="GO" id="GO:0008495">
    <property type="term" value="F:protoheme IX farnesyltransferase activity"/>
    <property type="evidence" value="ECO:0007669"/>
    <property type="project" value="UniProtKB-UniRule"/>
</dbReference>
<dbReference type="GO" id="GO:0048034">
    <property type="term" value="P:heme O biosynthetic process"/>
    <property type="evidence" value="ECO:0007669"/>
    <property type="project" value="UniProtKB-UniRule"/>
</dbReference>
<dbReference type="CDD" id="cd13957">
    <property type="entry name" value="PT_UbiA_Cox10"/>
    <property type="match status" value="1"/>
</dbReference>
<dbReference type="FunFam" id="1.10.357.140:FF:000001">
    <property type="entry name" value="Protoheme IX farnesyltransferase"/>
    <property type="match status" value="1"/>
</dbReference>
<dbReference type="Gene3D" id="1.10.357.140">
    <property type="entry name" value="UbiA prenyltransferase"/>
    <property type="match status" value="1"/>
</dbReference>
<dbReference type="HAMAP" id="MF_00154">
    <property type="entry name" value="CyoE_CtaB"/>
    <property type="match status" value="1"/>
</dbReference>
<dbReference type="InterPro" id="IPR006369">
    <property type="entry name" value="Protohaem_IX_farnesylTrfase"/>
</dbReference>
<dbReference type="InterPro" id="IPR000537">
    <property type="entry name" value="UbiA_prenyltransferase"/>
</dbReference>
<dbReference type="InterPro" id="IPR030470">
    <property type="entry name" value="UbiA_prenylTrfase_CS"/>
</dbReference>
<dbReference type="InterPro" id="IPR044878">
    <property type="entry name" value="UbiA_sf"/>
</dbReference>
<dbReference type="NCBIfam" id="TIGR01473">
    <property type="entry name" value="cyoE_ctaB"/>
    <property type="match status" value="1"/>
</dbReference>
<dbReference type="NCBIfam" id="NF003349">
    <property type="entry name" value="PRK04375.1-2"/>
    <property type="match status" value="1"/>
</dbReference>
<dbReference type="PANTHER" id="PTHR43448:SF7">
    <property type="entry name" value="4-HYDROXYBENZOATE SOLANESYLTRANSFERASE"/>
    <property type="match status" value="1"/>
</dbReference>
<dbReference type="PANTHER" id="PTHR43448">
    <property type="entry name" value="PROTOHEME IX FARNESYLTRANSFERASE, MITOCHONDRIAL"/>
    <property type="match status" value="1"/>
</dbReference>
<dbReference type="Pfam" id="PF01040">
    <property type="entry name" value="UbiA"/>
    <property type="match status" value="1"/>
</dbReference>
<dbReference type="PROSITE" id="PS00943">
    <property type="entry name" value="UBIA"/>
    <property type="match status" value="1"/>
</dbReference>
<feature type="chain" id="PRO_0000327191" description="Protoheme IX farnesyltransferase">
    <location>
        <begin position="1"/>
        <end position="534"/>
    </location>
</feature>
<feature type="transmembrane region" description="Helical" evidence="2">
    <location>
        <begin position="17"/>
        <end position="37"/>
    </location>
</feature>
<feature type="transmembrane region" description="Helical" evidence="2">
    <location>
        <begin position="39"/>
        <end position="59"/>
    </location>
</feature>
<feature type="transmembrane region" description="Helical" evidence="2">
    <location>
        <begin position="83"/>
        <end position="103"/>
    </location>
</feature>
<feature type="transmembrane region" description="Helical" evidence="2">
    <location>
        <begin position="128"/>
        <end position="148"/>
    </location>
</feature>
<feature type="transmembrane region" description="Helical" evidence="2">
    <location>
        <begin position="163"/>
        <end position="183"/>
    </location>
</feature>
<feature type="transmembrane region" description="Helical" evidence="2">
    <location>
        <begin position="197"/>
        <end position="217"/>
    </location>
</feature>
<feature type="transmembrane region" description="Helical" evidence="2">
    <location>
        <begin position="261"/>
        <end position="281"/>
    </location>
</feature>
<feature type="transmembrane region" description="Helical" evidence="2">
    <location>
        <begin position="284"/>
        <end position="304"/>
    </location>
</feature>
<feature type="transmembrane region" description="Helical" evidence="2">
    <location>
        <begin position="339"/>
        <end position="359"/>
    </location>
</feature>
<feature type="transmembrane region" description="Helical" evidence="2">
    <location>
        <begin position="360"/>
        <end position="380"/>
    </location>
</feature>
<feature type="transmembrane region" description="Helical" evidence="2">
    <location>
        <begin position="384"/>
        <end position="404"/>
    </location>
</feature>
<feature type="transmembrane region" description="Helical" evidence="2">
    <location>
        <begin position="411"/>
        <end position="431"/>
    </location>
</feature>
<feature type="transmembrane region" description="Helical" evidence="2">
    <location>
        <begin position="457"/>
        <end position="477"/>
    </location>
</feature>
<feature type="transmembrane region" description="Helical" evidence="2">
    <location>
        <begin position="479"/>
        <end position="499"/>
    </location>
</feature>
<feature type="transmembrane region" description="Helical" evidence="2">
    <location>
        <begin position="508"/>
        <end position="528"/>
    </location>
</feature>
<feature type="region of interest" description="Unknown">
    <location>
        <begin position="1"/>
        <end position="251"/>
    </location>
</feature>
<feature type="region of interest" description="Protoheme IX prenyltransferase">
    <location>
        <begin position="252"/>
        <end position="530"/>
    </location>
</feature>
<reference key="1">
    <citation type="submission" date="2007-04" db="EMBL/GenBank/DDBJ databases">
        <title>Complete sequence of Roseiflexus sp. RS-1.</title>
        <authorList>
            <consortium name="US DOE Joint Genome Institute"/>
            <person name="Copeland A."/>
            <person name="Lucas S."/>
            <person name="Lapidus A."/>
            <person name="Barry K."/>
            <person name="Detter J.C."/>
            <person name="Glavina del Rio T."/>
            <person name="Hammon N."/>
            <person name="Israni S."/>
            <person name="Dalin E."/>
            <person name="Tice H."/>
            <person name="Pitluck S."/>
            <person name="Chertkov O."/>
            <person name="Brettin T."/>
            <person name="Bruce D."/>
            <person name="Han C."/>
            <person name="Schmutz J."/>
            <person name="Larimer F."/>
            <person name="Land M."/>
            <person name="Hauser L."/>
            <person name="Kyrpides N."/>
            <person name="Mikhailova N."/>
            <person name="Bryant D.A."/>
            <person name="Richardson P."/>
        </authorList>
    </citation>
    <scope>NUCLEOTIDE SEQUENCE [LARGE SCALE GENOMIC DNA]</scope>
    <source>
        <strain>RS-1</strain>
    </source>
</reference>
<sequence length="534" mass="57006">MRREHARAILFPLVRLPWLLIVLALIAYGAVLAGGIVPALTGAAVSGIAMFTLGAALAIYTGMRVGAAPVRLGGRAASARRAYLTLAFAATGVLYLAVIFGAINTSAGTLWTCQTWPGCAMTGDSAWLALAHRGLAGGATLLIAALAVQTWRIRHERSLRIAVAWALGLMLIQNLVGLAQVLLAQGGESQPVAVARLMHLGLSATAWGALVVLTTLALRRPFPAVALLRPAHVARPGMTDTVLLEGKPSLLKDYISLTKPGVISLLILTTITSMYITPAGIPELSLVLWTTLGGWLMASGSHSINCYLDKDIDVNMGRTGRRPIPSGRIPAWHALALGIALGVVAFVILALFVNLLAAILALAGFLYYVFIYTIWLKRTSKHNIVIGGGAGAFPPLVGWAAVTGSLAPEALLLWLIVFFWTPPHFWALALIRQKDYARAGVPMLPVVEGDQETRRQIVIYTLSMLALTALPPVLGMLGWAYLMSAAVSGGLFLHYALKLRRDGTTTTAWALYKYSLLYLAILFVAMAVDRVVFA</sequence>
<comment type="function">
    <text evidence="1">Converts heme B (protoheme IX) to heme O by substitution of the vinyl group on carbon 2 of heme B porphyrin ring with a hydroxyethyl farnesyl side group.</text>
</comment>
<comment type="catalytic activity">
    <reaction>
        <text>heme b + (2E,6E)-farnesyl diphosphate + H2O = Fe(II)-heme o + diphosphate</text>
        <dbReference type="Rhea" id="RHEA:28070"/>
        <dbReference type="ChEBI" id="CHEBI:15377"/>
        <dbReference type="ChEBI" id="CHEBI:33019"/>
        <dbReference type="ChEBI" id="CHEBI:60344"/>
        <dbReference type="ChEBI" id="CHEBI:60530"/>
        <dbReference type="ChEBI" id="CHEBI:175763"/>
        <dbReference type="EC" id="2.5.1.141"/>
    </reaction>
</comment>
<comment type="pathway">
    <text>Porphyrin-containing compound metabolism; heme O biosynthesis; heme O from protoheme: step 1/1.</text>
</comment>
<comment type="subcellular location">
    <subcellularLocation>
        <location evidence="3">Cell membrane</location>
        <topology evidence="3">Multi-pass membrane protein</topology>
    </subcellularLocation>
</comment>
<comment type="miscellaneous">
    <text evidence="1">Carbon 2 of the heme B porphyrin ring is defined according to the Fischer nomenclature.</text>
</comment>
<comment type="similarity">
    <text evidence="3">In the C-terminal section; belongs to the UbiA prenyltransferase family. Protoheme IX farnesyltransferase subfamily.</text>
</comment>
<proteinExistence type="inferred from homology"/>
<protein>
    <recommendedName>
        <fullName>Protoheme IX farnesyltransferase</fullName>
        <ecNumber>2.5.1.141</ecNumber>
    </recommendedName>
    <alternativeName>
        <fullName>Heme B farnesyltransferase</fullName>
    </alternativeName>
    <alternativeName>
        <fullName>Heme O synthase</fullName>
    </alternativeName>
</protein>
<keyword id="KW-1003">Cell membrane</keyword>
<keyword id="KW-0350">Heme biosynthesis</keyword>
<keyword id="KW-0472">Membrane</keyword>
<keyword id="KW-0808">Transferase</keyword>
<keyword id="KW-0812">Transmembrane</keyword>
<keyword id="KW-1133">Transmembrane helix</keyword>
<accession>A5UPV7</accession>
<evidence type="ECO:0000250" key="1"/>
<evidence type="ECO:0000255" key="2"/>
<evidence type="ECO:0000305" key="3"/>
<name>COXX_ROSS1</name>